<sequence length="713" mass="82085">MSQSSRLSALPIFQASLSASQSPRYIFSSQNGTRIVFIQDNIIRWYNVLTDSLYHSLNFSRHLVLDDTFHVISSTSGDLLCLFNDNEIFVMEVPWGYSNVEDVSIQDAFQIFHYSIDEEEVGPKSSIKKVLFHPKSYRDSCIVVLKEDDTITMFDILNSQEKPIVLNKPNNSFGLDARVNDITDLEFSKDGLTLYCLNTTEGGDIFAFYPFLPSVLLLNEKDLNLILNKSLVMYESLDSTTDVIVKRNVIKQLQFVSKLHENWNSRFGKVDIQKEYRLAKVQGPFTINPFPGELYDYTATNIATILIDNGQNEIVCVSFDDGSLILLFKDLEMSMSWDVDNYVYNNSLVLIERVKLQREIKSLITLPEQLGKLYVISDNIIQQVNFMSWASTLSKCINESDLNPLAGLKFESKLEDIATIERIPNLAYINWNDQSNLALMSNKTLTFQNISSDMKPQSTAAETSISTEKSDTVGDGFKMSFTQPINEILILNDNFQKACISPCERIIPSADRQIPLKNEASENQLEIFTDISKEFLQRIVKAQTLGVSIHNRIHEQQFELTRQLQSTCKIISKDDDLRRKFEAQNKKWDAQLSRQSELMERFSKLSKKLSQIAESNKFKEKKISHGEMKWFKEIRNQILQFNSFVHSQKSLQQDLSYLKSELTRIEAETIKVDKKSQNEWDELRKMLEIDSKIIKECNEELLQVSQEFTTKTQ</sequence>
<proteinExistence type="evidence at protein level"/>
<name>NUP82_YEAST</name>
<keyword id="KW-0002">3D-structure</keyword>
<keyword id="KW-0175">Coiled coil</keyword>
<keyword id="KW-0472">Membrane</keyword>
<keyword id="KW-0509">mRNA transport</keyword>
<keyword id="KW-0906">Nuclear pore complex</keyword>
<keyword id="KW-0539">Nucleus</keyword>
<keyword id="KW-0653">Protein transport</keyword>
<keyword id="KW-1185">Reference proteome</keyword>
<keyword id="KW-0811">Translocation</keyword>
<keyword id="KW-0813">Transport</keyword>
<evidence type="ECO:0000255" key="1"/>
<evidence type="ECO:0000269" key="2">
    <source>
    </source>
</evidence>
<evidence type="ECO:0000269" key="3">
    <source>
    </source>
</evidence>
<evidence type="ECO:0000269" key="4">
    <source>
    </source>
</evidence>
<evidence type="ECO:0000269" key="5">
    <source>
    </source>
</evidence>
<evidence type="ECO:0000269" key="6">
    <source>
    </source>
</evidence>
<evidence type="ECO:0000269" key="7">
    <source>
    </source>
</evidence>
<evidence type="ECO:0000269" key="8">
    <source>
    </source>
</evidence>
<evidence type="ECO:0000269" key="9">
    <source>
    </source>
</evidence>
<evidence type="ECO:0000269" key="10">
    <source>
    </source>
</evidence>
<evidence type="ECO:0000269" key="11">
    <source>
    </source>
</evidence>
<evidence type="ECO:0000269" key="12">
    <source>
    </source>
</evidence>
<evidence type="ECO:0000312" key="13">
    <source>
        <dbReference type="SGD" id="S000003597"/>
    </source>
</evidence>
<evidence type="ECO:0007829" key="14">
    <source>
        <dbReference type="PDB" id="3PBP"/>
    </source>
</evidence>
<evidence type="ECO:0007829" key="15">
    <source>
        <dbReference type="PDB" id="3TKN"/>
    </source>
</evidence>
<reference key="1">
    <citation type="journal article" date="1995" name="J. Cell Biol.">
        <title>NUP82 is an essential yeast nucleoporin required for poly(A)+ RNA export.</title>
        <authorList>
            <person name="Hurwitz M.E."/>
            <person name="Blobel G."/>
        </authorList>
    </citation>
    <scope>NUCLEOTIDE SEQUENCE [GENOMIC DNA]</scope>
    <source>
        <strain>ATCC 200912 / DF5</strain>
    </source>
</reference>
<reference key="2">
    <citation type="journal article" date="1995" name="J. Cell Biol.">
        <title>A novel nuclear pore protein Nup82p which specifically binds to a fraction of Nsp1p.</title>
        <authorList>
            <person name="Grandi P."/>
            <person name="Emig S."/>
            <person name="Weise C."/>
            <person name="Hucho F."/>
            <person name="Pohl T.M."/>
            <person name="Hurt E.C."/>
        </authorList>
    </citation>
    <scope>NUCLEOTIDE SEQUENCE [GENOMIC DNA]</scope>
    <scope>FUNCTION IN MRNA EXPORT</scope>
</reference>
<reference key="3">
    <citation type="journal article" date="1996" name="EMBO J.">
        <title>Complete nucleotide sequence of Saccharomyces cerevisiae chromosome X.</title>
        <authorList>
            <person name="Galibert F."/>
            <person name="Alexandraki D."/>
            <person name="Baur A."/>
            <person name="Boles E."/>
            <person name="Chalwatzis N."/>
            <person name="Chuat J.-C."/>
            <person name="Coster F."/>
            <person name="Cziepluch C."/>
            <person name="de Haan M."/>
            <person name="Domdey H."/>
            <person name="Durand P."/>
            <person name="Entian K.-D."/>
            <person name="Gatius M."/>
            <person name="Goffeau A."/>
            <person name="Grivell L.A."/>
            <person name="Hennemann A."/>
            <person name="Herbert C.J."/>
            <person name="Heumann K."/>
            <person name="Hilger F."/>
            <person name="Hollenberg C.P."/>
            <person name="Huang M.-E."/>
            <person name="Jacq C."/>
            <person name="Jauniaux J.-C."/>
            <person name="Katsoulou C."/>
            <person name="Kirchrath L."/>
            <person name="Kleine K."/>
            <person name="Kordes E."/>
            <person name="Koetter P."/>
            <person name="Liebl S."/>
            <person name="Louis E.J."/>
            <person name="Manus V."/>
            <person name="Mewes H.-W."/>
            <person name="Miosga T."/>
            <person name="Obermaier B."/>
            <person name="Perea J."/>
            <person name="Pohl T.M."/>
            <person name="Portetelle D."/>
            <person name="Pujol A."/>
            <person name="Purnelle B."/>
            <person name="Ramezani Rad M."/>
            <person name="Rasmussen S.W."/>
            <person name="Rose M."/>
            <person name="Rossau R."/>
            <person name="Schaaff-Gerstenschlaeger I."/>
            <person name="Smits P.H.M."/>
            <person name="Scarcez T."/>
            <person name="Soriano N."/>
            <person name="To Van D."/>
            <person name="Tzermia M."/>
            <person name="Van Broekhoven A."/>
            <person name="Vandenbol M."/>
            <person name="Wedler H."/>
            <person name="von Wettstein D."/>
            <person name="Wambutt R."/>
            <person name="Zagulski M."/>
            <person name="Zollner A."/>
            <person name="Karpfinger-Hartl L."/>
        </authorList>
    </citation>
    <scope>NUCLEOTIDE SEQUENCE [LARGE SCALE GENOMIC DNA]</scope>
    <source>
        <strain>ATCC 204508 / S288c</strain>
    </source>
</reference>
<reference key="4">
    <citation type="journal article" date="2014" name="G3 (Bethesda)">
        <title>The reference genome sequence of Saccharomyces cerevisiae: Then and now.</title>
        <authorList>
            <person name="Engel S.R."/>
            <person name="Dietrich F.S."/>
            <person name="Fisk D.G."/>
            <person name="Binkley G."/>
            <person name="Balakrishnan R."/>
            <person name="Costanzo M.C."/>
            <person name="Dwight S.S."/>
            <person name="Hitz B.C."/>
            <person name="Karra K."/>
            <person name="Nash R.S."/>
            <person name="Weng S."/>
            <person name="Wong E.D."/>
            <person name="Lloyd P."/>
            <person name="Skrzypek M.S."/>
            <person name="Miyasato S.R."/>
            <person name="Simison M."/>
            <person name="Cherry J.M."/>
        </authorList>
    </citation>
    <scope>GENOME REANNOTATION</scope>
    <source>
        <strain>ATCC 204508 / S288c</strain>
    </source>
</reference>
<reference key="5">
    <citation type="journal article" date="1995" name="Yeast">
        <title>Sequence of a 17.1 kb DNA fragment from chromosome X of Saccharomyces cerevisiae includes the mitochondrial ribosomal protein L8.</title>
        <authorList>
            <person name="Vandenbol M."/>
            <person name="Durand P."/>
            <person name="Dion C."/>
            <person name="Portetelle D."/>
            <person name="Hilger F."/>
        </authorList>
    </citation>
    <scope>NUCLEOTIDE SEQUENCE [GENOMIC DNA] OF 1-187</scope>
    <source>
        <strain>ATCC 204508 / S288c</strain>
    </source>
</reference>
<reference key="6">
    <citation type="journal article" date="1998" name="Mol. Biol. Cell">
        <title>Functional characterization of a Nup159p-containing nuclear pore subcomplex.</title>
        <authorList>
            <person name="Belgareh N."/>
            <person name="Snay-Hodge C."/>
            <person name="Pasteau F."/>
            <person name="Dagher S."/>
            <person name="Cole C.N."/>
            <person name="Doye V."/>
        </authorList>
    </citation>
    <scope>FUNCTION</scope>
    <scope>INTERACTION WITH NUP159 AND NSP1</scope>
</reference>
<reference key="7">
    <citation type="journal article" date="2000" name="J. Biol. Chem.">
        <title>Nup116p associates with the Nup82p-Nsp1p-Nup159p nucleoporin complex.</title>
        <authorList>
            <person name="Bailer S.M."/>
            <person name="Balduf C."/>
            <person name="Katahira J."/>
            <person name="Podtelejnikov A."/>
            <person name="Rollenhagen C."/>
            <person name="Mann M."/>
            <person name="Pante N."/>
            <person name="Hurt E.C."/>
        </authorList>
    </citation>
    <scope>FUNCTION</scope>
    <scope>NUP82 NPC SUBCOMPLEX</scope>
</reference>
<reference key="8">
    <citation type="journal article" date="2000" name="J. Cell Biol.">
        <title>The yeast nuclear pore complex: composition, architecture, and transport mechanism.</title>
        <authorList>
            <person name="Rout M.P."/>
            <person name="Aitchison J.D."/>
            <person name="Suprapto A."/>
            <person name="Hjertaas K."/>
            <person name="Zhao Y."/>
            <person name="Chait B.T."/>
        </authorList>
    </citation>
    <scope>CHARACTERIZATION</scope>
    <scope>NPC SUBUNIT LOCATION</scope>
</reference>
<reference key="9">
    <citation type="journal article" date="2000" name="Mol. Cell. Biol.">
        <title>Assembly and preferential localization of Nup116p on the cytoplasmic face of the nuclear pore complex by interaction with Nup82p.</title>
        <authorList>
            <person name="Ho A.K."/>
            <person name="Shen T.X."/>
            <person name="Ryan K.J."/>
            <person name="Kiseleva E."/>
            <person name="Levy M.A."/>
            <person name="Allen T.D."/>
            <person name="Wente S.R."/>
        </authorList>
    </citation>
    <scope>FUNCTION</scope>
    <scope>INTERACTION WITH NUP116</scope>
</reference>
<reference key="10">
    <citation type="journal article" date="2001" name="J. Cell Biol.">
        <title>Ultrastructural localization of rRNA shows defective nuclear export of preribosomes in mutants of the Nup82p complex.</title>
        <authorList>
            <person name="Gleizes P.-E."/>
            <person name="Noaillac-Depeyre J."/>
            <person name="Leger-Silvestre I."/>
            <person name="Teulieres F."/>
            <person name="Dauxois J.-Y."/>
            <person name="Pommet D."/>
            <person name="Azum-Gelade M.-C."/>
            <person name="Gas N."/>
        </authorList>
    </citation>
    <scope>FUNCTION</scope>
    <scope>PRE-RIBOSOME EXPORT</scope>
</reference>
<reference key="11">
    <citation type="journal article" date="2001" name="Mol. Cell. Biol.">
        <title>The Nsp1p carboxy-terminal domain is organized into functionally distinct coiled-coil regions required for assembly of nucleoporin subcomplexes and nucleocytoplasmic transport.</title>
        <authorList>
            <person name="Bailer S.M."/>
            <person name="Balduf C."/>
            <person name="Hurt E.C."/>
        </authorList>
    </citation>
    <scope>FUNCTION</scope>
    <scope>NPC ASSEMBLY</scope>
</reference>
<reference key="12">
    <citation type="journal article" date="2003" name="Dev. Cell">
        <title>Peering through the pore: nuclear pore complex structure, assembly, and function.</title>
        <authorList>
            <person name="Suntharalingam M."/>
            <person name="Wente S.R."/>
        </authorList>
    </citation>
    <scope>REVIEW</scope>
</reference>
<reference key="13">
    <citation type="journal article" date="2003" name="Nature">
        <title>Global analysis of protein expression in yeast.</title>
        <authorList>
            <person name="Ghaemmaghami S."/>
            <person name="Huh W.-K."/>
            <person name="Bower K."/>
            <person name="Howson R.W."/>
            <person name="Belle A."/>
            <person name="Dephoure N."/>
            <person name="O'Shea E.K."/>
            <person name="Weissman J.S."/>
        </authorList>
    </citation>
    <scope>LEVEL OF PROTEIN EXPRESSION [LARGE SCALE ANALYSIS]</scope>
</reference>
<reference key="14">
    <citation type="journal article" date="2007" name="Nat. Cell Biol.">
        <title>Molecular basis for the functional interaction of dynein light chain with the nuclear-pore complex.</title>
        <authorList>
            <person name="Stelter P."/>
            <person name="Kunze R."/>
            <person name="Flemming D."/>
            <person name="Hoepfner D."/>
            <person name="Diepholz M."/>
            <person name="Philippsen P."/>
            <person name="Boettcher B."/>
            <person name="Hurt E."/>
        </authorList>
    </citation>
    <scope>IDENTIFICATION BY MASS SPECTROMETRY</scope>
</reference>
<reference key="15">
    <citation type="journal article" date="2015" name="J. Cell Biol.">
        <title>Structural basis for assembly and function of the Nup82 complex in the nuclear pore scaffold.</title>
        <authorList>
            <person name="Gaik M."/>
            <person name="Flemming D."/>
            <person name="von Appen A."/>
            <person name="Kastritis P."/>
            <person name="Muecke N."/>
            <person name="Fischer J."/>
            <person name="Stelter P."/>
            <person name="Ori A."/>
            <person name="Bui K.H."/>
            <person name="Bassler J."/>
            <person name="Barbar E."/>
            <person name="Beck M."/>
            <person name="Hurt E."/>
        </authorList>
    </citation>
    <scope>NUP82 NPC SUBCOMPLEX</scope>
    <scope>SUBCELLULAR LOCATION</scope>
</reference>
<reference key="16">
    <citation type="journal article" date="2011" name="Proc. Natl. Acad. Sci. U.S.A.">
        <title>Structural and functional analysis of an essential nucleoporin heterotrimer on the cytoplasmic face of the nuclear pore complex.</title>
        <authorList>
            <person name="Yoshida K."/>
            <person name="Seo H.S."/>
            <person name="Debler E.W."/>
            <person name="Blobel G."/>
            <person name="Hoelz A."/>
        </authorList>
    </citation>
    <scope>X-RAY CRYSTALLOGRAPHY (2.6 ANGSTROMS) OF 1-452 IN COMPLEX WITH NUP116 AND NUP159</scope>
    <scope>SUBUNIT</scope>
</reference>
<reference key="17">
    <citation type="journal article" date="2012" name="J. Mol. Biol.">
        <title>Molecular basis for the anchoring of proto-oncoprotein Nup98 to the cytoplasmic face of the nuclear pore complex.</title>
        <authorList>
            <person name="Stuwe T."/>
            <person name="von Borzyskowski L.S."/>
            <person name="Davenport A.M."/>
            <person name="Hoelz A."/>
        </authorList>
    </citation>
    <scope>X-RAY CRYSTALLOGRAPHY (3.4 ANGSTROMS) OF 1-452 IN COMPLEX WITH NUP159 AND THE MOUSE ORTHOLOG OF NUP145</scope>
    <scope>SUBUNIT</scope>
</reference>
<comment type="function">
    <text evidence="3 4 5 6 11 12">Functions as a component of the nuclear pore complex (NPC). NPC components, collectively referred to as nucleoporins (NUPs), can play the role of both NPC structural components and of docking or interaction partners for transiently associated nuclear transport factors. It is specifically involved as part of the NUP82-NUP159-NSP1 subcomplex in nuclear mRNA and pre-ribosome export by acting as a linker tethering nucleoporins that are directly involved in nuclear transport to the NPC via its coiled-coil domain.</text>
</comment>
<comment type="subunit">
    <text evidence="5 8 9 10">Component of the nuclear pore complex (NPC) (PubMed:11689687). NPC constitutes the exclusive means of nucleocytoplasmic transport. NPCs allow the passive diffusion of ions and small molecules and the active, nuclear transport receptor-mediated bidirectional transport of macromolecules such as proteins, RNAs, ribonucleoparticles (RNPs), and ribosomal subunits across the nuclear envelope. Due to its 8-fold rotational symmetry, all subunits are present with 8 copies or multiples thereof. NUP82 is part of the NUP82 subcomplex. This subcomplex is the base for interactions with NUP116 and GLE2, with NUP42 and GLE1 and with DYN2.</text>
</comment>
<comment type="interaction">
    <interactant intactId="EBI-12331">
        <id>P40368</id>
    </interactant>
    <interactant intactId="EBI-12265">
        <id>P14907</id>
        <label>NSP1</label>
    </interactant>
    <organismsDiffer>false</organismsDiffer>
    <experiments>8</experiments>
</comment>
<comment type="interaction">
    <interactant intactId="EBI-12331">
        <id>P40368</id>
    </interactant>
    <interactant intactId="EBI-11703">
        <id>Q02630</id>
        <label>NUP116</label>
    </interactant>
    <organismsDiffer>false</organismsDiffer>
    <experiments>3</experiments>
</comment>
<comment type="interaction">
    <interactant intactId="EBI-12331">
        <id>P40368</id>
    </interactant>
    <interactant intactId="EBI-11747">
        <id>P40477</id>
        <label>NUP159</label>
    </interactant>
    <organismsDiffer>false</organismsDiffer>
    <experiments>6</experiments>
</comment>
<comment type="subcellular location">
    <subcellularLocation>
        <location evidence="2 3">Nucleus</location>
        <location evidence="2 3">Nuclear pore complex</location>
    </subcellularLocation>
    <subcellularLocation>
        <location>Nucleus membrane</location>
        <topology>Peripheral membrane protein</topology>
        <orientation>Cytoplasmic side</orientation>
    </subcellularLocation>
</comment>
<comment type="miscellaneous">
    <text evidence="7">Present with 9470 molecules/cell in log phase SD medium.</text>
</comment>
<protein>
    <recommendedName>
        <fullName evidence="13">Nucleoporin NUP82</fullName>
    </recommendedName>
    <alternativeName>
        <fullName>Nuclear pore protein NUP82</fullName>
    </alternativeName>
</protein>
<organism>
    <name type="scientific">Saccharomyces cerevisiae (strain ATCC 204508 / S288c)</name>
    <name type="common">Baker's yeast</name>
    <dbReference type="NCBI Taxonomy" id="559292"/>
    <lineage>
        <taxon>Eukaryota</taxon>
        <taxon>Fungi</taxon>
        <taxon>Dikarya</taxon>
        <taxon>Ascomycota</taxon>
        <taxon>Saccharomycotina</taxon>
        <taxon>Saccharomycetes</taxon>
        <taxon>Saccharomycetales</taxon>
        <taxon>Saccharomycetaceae</taxon>
        <taxon>Saccharomyces</taxon>
    </lineage>
</organism>
<gene>
    <name type="primary">NUP82</name>
    <name type="ordered locus">YJL061W</name>
    <name type="ORF">HRB187</name>
    <name type="ORF">J1135</name>
</gene>
<feature type="chain" id="PRO_0000204883" description="Nucleoporin NUP82">
    <location>
        <begin position="1"/>
        <end position="713"/>
    </location>
</feature>
<feature type="region of interest" description="Interaction with NUP116" evidence="4">
    <location>
        <begin position="1"/>
        <end position="409"/>
    </location>
</feature>
<feature type="region of interest" description="Interaction with NSP1 and NUP159" evidence="12">
    <location>
        <begin position="463"/>
        <end position="713"/>
    </location>
</feature>
<feature type="coiled-coil region" evidence="1">
    <location>
        <begin position="582"/>
        <end position="713"/>
    </location>
</feature>
<feature type="short sequence motif" description="Bipartite nuclear localization signal">
    <location>
        <begin position="607"/>
        <end position="623"/>
    </location>
</feature>
<feature type="strand" evidence="15">
    <location>
        <begin position="5"/>
        <end position="8"/>
    </location>
</feature>
<feature type="turn" evidence="14">
    <location>
        <begin position="11"/>
        <end position="13"/>
    </location>
</feature>
<feature type="strand" evidence="15">
    <location>
        <begin position="20"/>
        <end position="22"/>
    </location>
</feature>
<feature type="strand" evidence="14">
    <location>
        <begin position="24"/>
        <end position="29"/>
    </location>
</feature>
<feature type="turn" evidence="14">
    <location>
        <begin position="30"/>
        <end position="33"/>
    </location>
</feature>
<feature type="strand" evidence="14">
    <location>
        <begin position="34"/>
        <end position="39"/>
    </location>
</feature>
<feature type="strand" evidence="14">
    <location>
        <begin position="42"/>
        <end position="47"/>
    </location>
</feature>
<feature type="turn" evidence="14">
    <location>
        <begin position="48"/>
        <end position="50"/>
    </location>
</feature>
<feature type="strand" evidence="14">
    <location>
        <begin position="55"/>
        <end position="58"/>
    </location>
</feature>
<feature type="turn" evidence="14">
    <location>
        <begin position="60"/>
        <end position="62"/>
    </location>
</feature>
<feature type="strand" evidence="14">
    <location>
        <begin position="70"/>
        <end position="73"/>
    </location>
</feature>
<feature type="strand" evidence="14">
    <location>
        <begin position="77"/>
        <end position="83"/>
    </location>
</feature>
<feature type="strand" evidence="14">
    <location>
        <begin position="85"/>
        <end position="92"/>
    </location>
</feature>
<feature type="helix" evidence="14">
    <location>
        <begin position="103"/>
        <end position="107"/>
    </location>
</feature>
<feature type="strand" evidence="14">
    <location>
        <begin position="110"/>
        <end position="115"/>
    </location>
</feature>
<feature type="helix" evidence="14">
    <location>
        <begin position="116"/>
        <end position="118"/>
    </location>
</feature>
<feature type="strand" evidence="15">
    <location>
        <begin position="119"/>
        <end position="122"/>
    </location>
</feature>
<feature type="strand" evidence="14">
    <location>
        <begin position="127"/>
        <end position="132"/>
    </location>
</feature>
<feature type="helix" evidence="14">
    <location>
        <begin position="137"/>
        <end position="139"/>
    </location>
</feature>
<feature type="strand" evidence="14">
    <location>
        <begin position="141"/>
        <end position="146"/>
    </location>
</feature>
<feature type="strand" evidence="14">
    <location>
        <begin position="151"/>
        <end position="155"/>
    </location>
</feature>
<feature type="strand" evidence="14">
    <location>
        <begin position="164"/>
        <end position="167"/>
    </location>
</feature>
<feature type="strand" evidence="14">
    <location>
        <begin position="171"/>
        <end position="175"/>
    </location>
</feature>
<feature type="strand" evidence="14">
    <location>
        <begin position="182"/>
        <end position="187"/>
    </location>
</feature>
<feature type="strand" evidence="14">
    <location>
        <begin position="194"/>
        <end position="198"/>
    </location>
</feature>
<feature type="strand" evidence="14">
    <location>
        <begin position="204"/>
        <end position="210"/>
    </location>
</feature>
<feature type="strand" evidence="14">
    <location>
        <begin position="214"/>
        <end position="217"/>
    </location>
</feature>
<feature type="helix" evidence="14">
    <location>
        <begin position="220"/>
        <end position="235"/>
    </location>
</feature>
<feature type="strand" evidence="14">
    <location>
        <begin position="239"/>
        <end position="241"/>
    </location>
</feature>
<feature type="helix" evidence="14">
    <location>
        <begin position="243"/>
        <end position="262"/>
    </location>
</feature>
<feature type="turn" evidence="14">
    <location>
        <begin position="265"/>
        <end position="268"/>
    </location>
</feature>
<feature type="strand" evidence="14">
    <location>
        <begin position="269"/>
        <end position="271"/>
    </location>
</feature>
<feature type="helix" evidence="14">
    <location>
        <begin position="274"/>
        <end position="277"/>
    </location>
</feature>
<feature type="strand" evidence="14">
    <location>
        <begin position="286"/>
        <end position="288"/>
    </location>
</feature>
<feature type="helix" evidence="14">
    <location>
        <begin position="293"/>
        <end position="296"/>
    </location>
</feature>
<feature type="strand" evidence="14">
    <location>
        <begin position="299"/>
        <end position="306"/>
    </location>
</feature>
<feature type="strand" evidence="14">
    <location>
        <begin position="308"/>
        <end position="311"/>
    </location>
</feature>
<feature type="strand" evidence="14">
    <location>
        <begin position="313"/>
        <end position="319"/>
    </location>
</feature>
<feature type="turn" evidence="14">
    <location>
        <begin position="320"/>
        <end position="322"/>
    </location>
</feature>
<feature type="strand" evidence="14">
    <location>
        <begin position="323"/>
        <end position="329"/>
    </location>
</feature>
<feature type="strand" evidence="14">
    <location>
        <begin position="347"/>
        <end position="355"/>
    </location>
</feature>
<feature type="strand" evidence="14">
    <location>
        <begin position="362"/>
        <end position="364"/>
    </location>
</feature>
<feature type="strand" evidence="14">
    <location>
        <begin position="372"/>
        <end position="376"/>
    </location>
</feature>
<feature type="strand" evidence="14">
    <location>
        <begin position="378"/>
        <end position="385"/>
    </location>
</feature>
<feature type="helix" evidence="14">
    <location>
        <begin position="387"/>
        <end position="399"/>
    </location>
</feature>
<feature type="helix" evidence="14">
    <location>
        <begin position="403"/>
        <end position="405"/>
    </location>
</feature>
<feature type="strand" evidence="14">
    <location>
        <begin position="413"/>
        <end position="419"/>
    </location>
</feature>
<feature type="strand" evidence="14">
    <location>
        <begin position="425"/>
        <end position="431"/>
    </location>
</feature>
<feature type="strand" evidence="14">
    <location>
        <begin position="434"/>
        <end position="440"/>
    </location>
</feature>
<feature type="strand" evidence="14">
    <location>
        <begin position="445"/>
        <end position="449"/>
    </location>
</feature>
<accession>P40368</accession>
<accession>D6VWC1</accession>
<dbReference type="EMBL" id="U31543">
    <property type="protein sequence ID" value="AAA85504.1"/>
    <property type="molecule type" value="Genomic_DNA"/>
</dbReference>
<dbReference type="EMBL" id="X85970">
    <property type="protein sequence ID" value="CAA59957.1"/>
    <property type="molecule type" value="Genomic_DNA"/>
</dbReference>
<dbReference type="EMBL" id="Z49336">
    <property type="protein sequence ID" value="CAA89352.1"/>
    <property type="molecule type" value="Genomic_DNA"/>
</dbReference>
<dbReference type="EMBL" id="Z34288">
    <property type="protein sequence ID" value="CAA84062.1"/>
    <property type="molecule type" value="Genomic_DNA"/>
</dbReference>
<dbReference type="EMBL" id="BK006943">
    <property type="protein sequence ID" value="DAA08737.1"/>
    <property type="molecule type" value="Genomic_DNA"/>
</dbReference>
<dbReference type="PIR" id="S56833">
    <property type="entry name" value="S56833"/>
</dbReference>
<dbReference type="RefSeq" id="NP_012474.1">
    <property type="nucleotide sequence ID" value="NM_001181494.1"/>
</dbReference>
<dbReference type="PDB" id="3PBP">
    <property type="method" value="X-ray"/>
    <property type="resolution" value="2.60 A"/>
    <property type="chains" value="A/D/G/J=1-452"/>
</dbReference>
<dbReference type="PDB" id="3TKN">
    <property type="method" value="X-ray"/>
    <property type="resolution" value="3.40 A"/>
    <property type="chains" value="A/D/G=1-452"/>
</dbReference>
<dbReference type="PDB" id="7N9F">
    <property type="method" value="EM"/>
    <property type="resolution" value="37.00 A"/>
    <property type="chains" value="u/v=1-713"/>
</dbReference>
<dbReference type="PDBsum" id="3PBP"/>
<dbReference type="PDBsum" id="3TKN"/>
<dbReference type="PDBsum" id="7N9F"/>
<dbReference type="EMDB" id="EMD-24258"/>
<dbReference type="SMR" id="P40368"/>
<dbReference type="BioGRID" id="33693">
    <property type="interactions" value="188"/>
</dbReference>
<dbReference type="ComplexPortal" id="CPX-824">
    <property type="entry name" value="Nuclear pore complex"/>
</dbReference>
<dbReference type="DIP" id="DIP-913N"/>
<dbReference type="FunCoup" id="P40368">
    <property type="interactions" value="200"/>
</dbReference>
<dbReference type="IntAct" id="P40368">
    <property type="interactions" value="27"/>
</dbReference>
<dbReference type="MINT" id="P40368"/>
<dbReference type="STRING" id="4932.YJL061W"/>
<dbReference type="TCDB" id="1.I.1.1.1">
    <property type="family name" value="the nuclear pore complex (npc) family"/>
</dbReference>
<dbReference type="iPTMnet" id="P40368"/>
<dbReference type="PaxDb" id="4932-YJL061W"/>
<dbReference type="PeptideAtlas" id="P40368"/>
<dbReference type="EnsemblFungi" id="YJL061W_mRNA">
    <property type="protein sequence ID" value="YJL061W"/>
    <property type="gene ID" value="YJL061W"/>
</dbReference>
<dbReference type="GeneID" id="853385"/>
<dbReference type="KEGG" id="sce:YJL061W"/>
<dbReference type="AGR" id="SGD:S000003597"/>
<dbReference type="SGD" id="S000003597">
    <property type="gene designation" value="NUP82"/>
</dbReference>
<dbReference type="VEuPathDB" id="FungiDB:YJL061W"/>
<dbReference type="eggNOG" id="ENOG502T8MV">
    <property type="taxonomic scope" value="Eukaryota"/>
</dbReference>
<dbReference type="HOGENOM" id="CLU_398512_0_0_1"/>
<dbReference type="InParanoid" id="P40368"/>
<dbReference type="OMA" id="KRNVIKQ"/>
<dbReference type="OrthoDB" id="341482at2759"/>
<dbReference type="BioCyc" id="YEAST:G3O-31523-MONOMER"/>
<dbReference type="Reactome" id="R-SCE-159236">
    <property type="pathway name" value="Transport of Mature mRNA derived from an Intron-Containing Transcript"/>
</dbReference>
<dbReference type="Reactome" id="R-SCE-3371453">
    <property type="pathway name" value="Regulation of HSF1-mediated heat shock response"/>
</dbReference>
<dbReference type="Reactome" id="R-SCE-4085377">
    <property type="pathway name" value="SUMOylation of SUMOylation proteins"/>
</dbReference>
<dbReference type="Reactome" id="R-SCE-4551638">
    <property type="pathway name" value="SUMOylation of chromatin organization proteins"/>
</dbReference>
<dbReference type="Reactome" id="R-SCE-4570464">
    <property type="pathway name" value="SUMOylation of RNA binding proteins"/>
</dbReference>
<dbReference type="BioGRID-ORCS" id="853385">
    <property type="hits" value="0 hits in 10 CRISPR screens"/>
</dbReference>
<dbReference type="EvolutionaryTrace" id="P40368"/>
<dbReference type="PRO" id="PR:P40368"/>
<dbReference type="Proteomes" id="UP000002311">
    <property type="component" value="Chromosome X"/>
</dbReference>
<dbReference type="RNAct" id="P40368">
    <property type="molecule type" value="protein"/>
</dbReference>
<dbReference type="GO" id="GO:0005829">
    <property type="term" value="C:cytosol"/>
    <property type="evidence" value="ECO:0000314"/>
    <property type="project" value="SGD"/>
</dbReference>
<dbReference type="GO" id="GO:0005635">
    <property type="term" value="C:nuclear envelope"/>
    <property type="evidence" value="ECO:0000303"/>
    <property type="project" value="ComplexPortal"/>
</dbReference>
<dbReference type="GO" id="GO:0031965">
    <property type="term" value="C:nuclear membrane"/>
    <property type="evidence" value="ECO:0007669"/>
    <property type="project" value="UniProtKB-SubCell"/>
</dbReference>
<dbReference type="GO" id="GO:0005643">
    <property type="term" value="C:nuclear pore"/>
    <property type="evidence" value="ECO:0000314"/>
    <property type="project" value="SGD"/>
</dbReference>
<dbReference type="GO" id="GO:0044614">
    <property type="term" value="C:nuclear pore cytoplasmic filaments"/>
    <property type="evidence" value="ECO:0000314"/>
    <property type="project" value="SGD"/>
</dbReference>
<dbReference type="GO" id="GO:0044612">
    <property type="term" value="C:nuclear pore linkers"/>
    <property type="evidence" value="ECO:0000314"/>
    <property type="project" value="SGD"/>
</dbReference>
<dbReference type="GO" id="GO:0005634">
    <property type="term" value="C:nucleus"/>
    <property type="evidence" value="ECO:0000314"/>
    <property type="project" value="SGD"/>
</dbReference>
<dbReference type="GO" id="GO:0017056">
    <property type="term" value="F:structural constituent of nuclear pore"/>
    <property type="evidence" value="ECO:0000305"/>
    <property type="project" value="SGD"/>
</dbReference>
<dbReference type="GO" id="GO:0006406">
    <property type="term" value="P:mRNA export from nucleus"/>
    <property type="evidence" value="ECO:0000315"/>
    <property type="project" value="SGD"/>
</dbReference>
<dbReference type="GO" id="GO:0006913">
    <property type="term" value="P:nucleocytoplasmic transport"/>
    <property type="evidence" value="ECO:0000303"/>
    <property type="project" value="ComplexPortal"/>
</dbReference>
<dbReference type="GO" id="GO:0006611">
    <property type="term" value="P:protein export from nucleus"/>
    <property type="evidence" value="ECO:0000315"/>
    <property type="project" value="SGD"/>
</dbReference>
<dbReference type="GO" id="GO:0006606">
    <property type="term" value="P:protein import into nucleus"/>
    <property type="evidence" value="ECO:0000315"/>
    <property type="project" value="SGD"/>
</dbReference>
<dbReference type="GO" id="GO:0000055">
    <property type="term" value="P:ribosomal large subunit export from nucleus"/>
    <property type="evidence" value="ECO:0000315"/>
    <property type="project" value="SGD"/>
</dbReference>
<dbReference type="GO" id="GO:0000056">
    <property type="term" value="P:ribosomal small subunit export from nucleus"/>
    <property type="evidence" value="ECO:0000315"/>
    <property type="project" value="SGD"/>
</dbReference>
<dbReference type="InterPro" id="IPR037700">
    <property type="entry name" value="NUP88/NUP82"/>
</dbReference>
<dbReference type="PANTHER" id="PTHR13257:SF0">
    <property type="entry name" value="NUCLEAR PORE COMPLEX PROTEIN NUP88"/>
    <property type="match status" value="1"/>
</dbReference>
<dbReference type="PANTHER" id="PTHR13257">
    <property type="entry name" value="NUCLEOPORIN NUP84-RELATED"/>
    <property type="match status" value="1"/>
</dbReference>
<dbReference type="SUPFAM" id="SSF82171">
    <property type="entry name" value="DPP6 N-terminal domain-like"/>
    <property type="match status" value="1"/>
</dbReference>